<dbReference type="EMBL" id="BC057037">
    <property type="protein sequence ID" value="AAH57037.1"/>
    <property type="molecule type" value="mRNA"/>
</dbReference>
<dbReference type="EMBL" id="BC060628">
    <property type="protein sequence ID" value="AAH60628.1"/>
    <property type="molecule type" value="mRNA"/>
</dbReference>
<dbReference type="CCDS" id="CCDS22350.1">
    <molecule id="Q6PGG2-1"/>
</dbReference>
<dbReference type="RefSeq" id="NP_932769.1">
    <molecule id="Q6PGG2-1"/>
    <property type="nucleotide sequence ID" value="NM_198101.1"/>
</dbReference>
<dbReference type="SMR" id="Q6PGG2"/>
<dbReference type="BioGRID" id="219655">
    <property type="interactions" value="3"/>
</dbReference>
<dbReference type="FunCoup" id="Q6PGG2">
    <property type="interactions" value="352"/>
</dbReference>
<dbReference type="STRING" id="10090.ENSMUSP00000045676"/>
<dbReference type="GlyGen" id="Q6PGG2">
    <property type="glycosylation" value="2 sites, 1 O-linked glycan (2 sites)"/>
</dbReference>
<dbReference type="iPTMnet" id="Q6PGG2"/>
<dbReference type="PhosphoSitePlus" id="Q6PGG2"/>
<dbReference type="jPOST" id="Q6PGG2"/>
<dbReference type="PaxDb" id="10090-ENSMUSP00000045676"/>
<dbReference type="PeptideAtlas" id="Q6PGG2"/>
<dbReference type="ProteomicsDB" id="271405">
    <molecule id="Q6PGG2-1"/>
</dbReference>
<dbReference type="ProteomicsDB" id="271406">
    <molecule id="Q6PGG2-2"/>
</dbReference>
<dbReference type="Pumba" id="Q6PGG2"/>
<dbReference type="Antibodypedia" id="61622">
    <property type="antibodies" value="77 antibodies from 18 providers"/>
</dbReference>
<dbReference type="DNASU" id="78816"/>
<dbReference type="Ensembl" id="ENSMUST00000036074.15">
    <molecule id="Q6PGG2-1"/>
    <property type="protein sequence ID" value="ENSMUSP00000045676.9"/>
    <property type="gene ID" value="ENSMUSG00000036246.15"/>
</dbReference>
<dbReference type="Ensembl" id="ENSMUST00000123453.2">
    <molecule id="Q6PGG2-2"/>
    <property type="protein sequence ID" value="ENSMUSP00000116542.2"/>
    <property type="gene ID" value="ENSMUSG00000036246.15"/>
</dbReference>
<dbReference type="GeneID" id="78816"/>
<dbReference type="KEGG" id="mmu:78816"/>
<dbReference type="UCSC" id="uc009lxs.1">
    <molecule id="Q6PGG2-2"/>
    <property type="organism name" value="mouse"/>
</dbReference>
<dbReference type="UCSC" id="uc009lxt.1">
    <molecule id="Q6PGG2-1"/>
    <property type="organism name" value="mouse"/>
</dbReference>
<dbReference type="AGR" id="MGI:1926066"/>
<dbReference type="CTD" id="51291"/>
<dbReference type="MGI" id="MGI:1926066">
    <property type="gene designation" value="Gmip"/>
</dbReference>
<dbReference type="VEuPathDB" id="HostDB:ENSMUSG00000036246"/>
<dbReference type="eggNOG" id="KOG1453">
    <property type="taxonomic scope" value="Eukaryota"/>
</dbReference>
<dbReference type="GeneTree" id="ENSGT00950000183110"/>
<dbReference type="HOGENOM" id="CLU_006236_1_0_1"/>
<dbReference type="InParanoid" id="Q6PGG2"/>
<dbReference type="OMA" id="PVKYYRH"/>
<dbReference type="OrthoDB" id="79452at2759"/>
<dbReference type="PhylomeDB" id="Q6PGG2"/>
<dbReference type="TreeFam" id="TF351450"/>
<dbReference type="Reactome" id="R-MMU-8980692">
    <property type="pathway name" value="RHOA GTPase cycle"/>
</dbReference>
<dbReference type="Reactome" id="R-MMU-9013148">
    <property type="pathway name" value="CDC42 GTPase cycle"/>
</dbReference>
<dbReference type="Reactome" id="R-MMU-9013149">
    <property type="pathway name" value="RAC1 GTPase cycle"/>
</dbReference>
<dbReference type="BioGRID-ORCS" id="78816">
    <property type="hits" value="4 hits in 74 CRISPR screens"/>
</dbReference>
<dbReference type="ChiTaRS" id="Gmip">
    <property type="organism name" value="mouse"/>
</dbReference>
<dbReference type="PRO" id="PR:Q6PGG2"/>
<dbReference type="Proteomes" id="UP000000589">
    <property type="component" value="Chromosome 8"/>
</dbReference>
<dbReference type="RNAct" id="Q6PGG2">
    <property type="molecule type" value="protein"/>
</dbReference>
<dbReference type="Bgee" id="ENSMUSG00000036246">
    <property type="expression patterns" value="Expressed in granulocyte and 158 other cell types or tissues"/>
</dbReference>
<dbReference type="ExpressionAtlas" id="Q6PGG2">
    <property type="expression patterns" value="baseline and differential"/>
</dbReference>
<dbReference type="GO" id="GO:0005829">
    <property type="term" value="C:cytosol"/>
    <property type="evidence" value="ECO:0007669"/>
    <property type="project" value="Ensembl"/>
</dbReference>
<dbReference type="GO" id="GO:0005654">
    <property type="term" value="C:nucleoplasm"/>
    <property type="evidence" value="ECO:0007669"/>
    <property type="project" value="Ensembl"/>
</dbReference>
<dbReference type="GO" id="GO:0005886">
    <property type="term" value="C:plasma membrane"/>
    <property type="evidence" value="ECO:0007669"/>
    <property type="project" value="Ensembl"/>
</dbReference>
<dbReference type="GO" id="GO:0005096">
    <property type="term" value="F:GTPase activator activity"/>
    <property type="evidence" value="ECO:0007669"/>
    <property type="project" value="UniProtKB-KW"/>
</dbReference>
<dbReference type="GO" id="GO:0008270">
    <property type="term" value="F:zinc ion binding"/>
    <property type="evidence" value="ECO:0007669"/>
    <property type="project" value="UniProtKB-KW"/>
</dbReference>
<dbReference type="GO" id="GO:0051056">
    <property type="term" value="P:regulation of small GTPase mediated signal transduction"/>
    <property type="evidence" value="ECO:0007669"/>
    <property type="project" value="UniProtKB-ARBA"/>
</dbReference>
<dbReference type="GO" id="GO:0007264">
    <property type="term" value="P:small GTPase-mediated signal transduction"/>
    <property type="evidence" value="ECO:0007669"/>
    <property type="project" value="Ensembl"/>
</dbReference>
<dbReference type="CDD" id="cd20816">
    <property type="entry name" value="C1_GMIP-like"/>
    <property type="match status" value="1"/>
</dbReference>
<dbReference type="Gene3D" id="3.30.60.20">
    <property type="match status" value="1"/>
</dbReference>
<dbReference type="Gene3D" id="1.20.1270.60">
    <property type="entry name" value="Arfaptin homology (AH) domain/BAR domain"/>
    <property type="match status" value="1"/>
</dbReference>
<dbReference type="Gene3D" id="1.10.555.10">
    <property type="entry name" value="Rho GTPase activation protein"/>
    <property type="match status" value="1"/>
</dbReference>
<dbReference type="InterPro" id="IPR027267">
    <property type="entry name" value="AH/BAR_dom_sf"/>
</dbReference>
<dbReference type="InterPro" id="IPR046349">
    <property type="entry name" value="C1-like_sf"/>
</dbReference>
<dbReference type="InterPro" id="IPR031160">
    <property type="entry name" value="F_BAR"/>
</dbReference>
<dbReference type="InterPro" id="IPR054713">
    <property type="entry name" value="GMIP/FCHO2-like_FCH"/>
</dbReference>
<dbReference type="InterPro" id="IPR002219">
    <property type="entry name" value="PE/DAG-bd"/>
</dbReference>
<dbReference type="InterPro" id="IPR008936">
    <property type="entry name" value="Rho_GTPase_activation_prot"/>
</dbReference>
<dbReference type="InterPro" id="IPR051025">
    <property type="entry name" value="RhoGAP"/>
</dbReference>
<dbReference type="InterPro" id="IPR000198">
    <property type="entry name" value="RhoGAP_dom"/>
</dbReference>
<dbReference type="PANTHER" id="PTHR15228:SF16">
    <property type="entry name" value="GEM-INTERACTING PROTEIN"/>
    <property type="match status" value="1"/>
</dbReference>
<dbReference type="PANTHER" id="PTHR15228">
    <property type="entry name" value="SPERMATHECAL PHYSIOLOGY VARIANT"/>
    <property type="match status" value="1"/>
</dbReference>
<dbReference type="Pfam" id="PF22699">
    <property type="entry name" value="GMIP-like_FCH"/>
    <property type="match status" value="1"/>
</dbReference>
<dbReference type="Pfam" id="PF00620">
    <property type="entry name" value="RhoGAP"/>
    <property type="match status" value="1"/>
</dbReference>
<dbReference type="SMART" id="SM00109">
    <property type="entry name" value="C1"/>
    <property type="match status" value="1"/>
</dbReference>
<dbReference type="SMART" id="SM00324">
    <property type="entry name" value="RhoGAP"/>
    <property type="match status" value="1"/>
</dbReference>
<dbReference type="SUPFAM" id="SSF103657">
    <property type="entry name" value="BAR/IMD domain-like"/>
    <property type="match status" value="1"/>
</dbReference>
<dbReference type="SUPFAM" id="SSF57889">
    <property type="entry name" value="Cysteine-rich domain"/>
    <property type="match status" value="1"/>
</dbReference>
<dbReference type="SUPFAM" id="SSF48350">
    <property type="entry name" value="GTPase activation domain, GAP"/>
    <property type="match status" value="1"/>
</dbReference>
<dbReference type="PROSITE" id="PS51741">
    <property type="entry name" value="F_BAR"/>
    <property type="match status" value="1"/>
</dbReference>
<dbReference type="PROSITE" id="PS50238">
    <property type="entry name" value="RHOGAP"/>
    <property type="match status" value="1"/>
</dbReference>
<dbReference type="PROSITE" id="PS00479">
    <property type="entry name" value="ZF_DAG_PE_1"/>
    <property type="match status" value="1"/>
</dbReference>
<dbReference type="PROSITE" id="PS50081">
    <property type="entry name" value="ZF_DAG_PE_2"/>
    <property type="match status" value="1"/>
</dbReference>
<gene>
    <name type="primary">Gmip</name>
</gene>
<evidence type="ECO:0000250" key="1"/>
<evidence type="ECO:0000250" key="2">
    <source>
        <dbReference type="UniProtKB" id="Q9P107"/>
    </source>
</evidence>
<evidence type="ECO:0000255" key="3">
    <source>
        <dbReference type="PROSITE-ProRule" id="PRU00172"/>
    </source>
</evidence>
<evidence type="ECO:0000255" key="4">
    <source>
        <dbReference type="PROSITE-ProRule" id="PRU00226"/>
    </source>
</evidence>
<evidence type="ECO:0000255" key="5">
    <source>
        <dbReference type="PROSITE-ProRule" id="PRU01077"/>
    </source>
</evidence>
<evidence type="ECO:0000256" key="6">
    <source>
        <dbReference type="SAM" id="MobiDB-lite"/>
    </source>
</evidence>
<evidence type="ECO:0000303" key="7">
    <source>
    </source>
</evidence>
<evidence type="ECO:0007744" key="8">
    <source>
    </source>
</evidence>
<evidence type="ECO:0007744" key="9">
    <source>
    </source>
</evidence>
<evidence type="ECO:0007744" key="10">
    <source>
    </source>
</evidence>
<accession>Q6PGG2</accession>
<accession>Q6P9S3</accession>
<proteinExistence type="evidence at protein level"/>
<organism>
    <name type="scientific">Mus musculus</name>
    <name type="common">Mouse</name>
    <dbReference type="NCBI Taxonomy" id="10090"/>
    <lineage>
        <taxon>Eukaryota</taxon>
        <taxon>Metazoa</taxon>
        <taxon>Chordata</taxon>
        <taxon>Craniata</taxon>
        <taxon>Vertebrata</taxon>
        <taxon>Euteleostomi</taxon>
        <taxon>Mammalia</taxon>
        <taxon>Eutheria</taxon>
        <taxon>Euarchontoglires</taxon>
        <taxon>Glires</taxon>
        <taxon>Rodentia</taxon>
        <taxon>Myomorpha</taxon>
        <taxon>Muroidea</taxon>
        <taxon>Muridae</taxon>
        <taxon>Murinae</taxon>
        <taxon>Mus</taxon>
        <taxon>Mus</taxon>
    </lineage>
</organism>
<comment type="function">
    <text evidence="1">Stimulates, in vitro and in vivo, the GTPase activity of RhoA.</text>
</comment>
<comment type="subunit">
    <text evidence="1">Interacts with GEM through its N-terminal.</text>
</comment>
<comment type="alternative products">
    <event type="alternative splicing"/>
    <isoform>
        <id>Q6PGG2-1</id>
        <name>1</name>
        <sequence type="displayed"/>
    </isoform>
    <isoform>
        <id>Q6PGG2-2</id>
        <name>2</name>
        <sequence type="described" ref="VSP_013190 VSP_013191"/>
    </isoform>
</comment>
<feature type="chain" id="PRO_0000056726" description="GEM-interacting protein">
    <location>
        <begin position="1"/>
        <end position="971"/>
    </location>
</feature>
<feature type="domain" description="F-BAR" evidence="5">
    <location>
        <begin position="85"/>
        <end position="348"/>
    </location>
</feature>
<feature type="domain" description="Rho-GAP" evidence="3">
    <location>
        <begin position="553"/>
        <end position="756"/>
    </location>
</feature>
<feature type="zinc finger region" description="Phorbol-ester/DAG-type" evidence="4">
    <location>
        <begin position="492"/>
        <end position="536"/>
    </location>
</feature>
<feature type="region of interest" description="Disordered" evidence="6">
    <location>
        <begin position="41"/>
        <end position="79"/>
    </location>
</feature>
<feature type="region of interest" description="Disordered" evidence="6">
    <location>
        <begin position="231"/>
        <end position="267"/>
    </location>
</feature>
<feature type="region of interest" description="Disordered" evidence="6">
    <location>
        <begin position="383"/>
        <end position="476"/>
    </location>
</feature>
<feature type="region of interest" description="Disordered" evidence="6">
    <location>
        <begin position="799"/>
        <end position="865"/>
    </location>
</feature>
<feature type="compositionally biased region" description="Basic and acidic residues" evidence="6">
    <location>
        <begin position="44"/>
        <end position="56"/>
    </location>
</feature>
<feature type="compositionally biased region" description="Polar residues" evidence="6">
    <location>
        <begin position="59"/>
        <end position="69"/>
    </location>
</feature>
<feature type="compositionally biased region" description="Acidic residues" evidence="6">
    <location>
        <begin position="458"/>
        <end position="471"/>
    </location>
</feature>
<feature type="compositionally biased region" description="Basic and acidic residues" evidence="6">
    <location>
        <begin position="805"/>
        <end position="817"/>
    </location>
</feature>
<feature type="site" description="Arginine finger; crucial for GTP hydrolysis by stabilizing the transition state" evidence="3">
    <location>
        <position position="586"/>
    </location>
</feature>
<feature type="modified residue" description="Phosphoserine" evidence="2">
    <location>
        <position position="19"/>
    </location>
</feature>
<feature type="modified residue" description="Phosphoserine" evidence="8 9 10">
    <location>
        <position position="75"/>
    </location>
</feature>
<feature type="modified residue" description="Phosphoserine" evidence="2">
    <location>
        <position position="235"/>
    </location>
</feature>
<feature type="modified residue" description="Phosphoserine" evidence="2">
    <location>
        <position position="238"/>
    </location>
</feature>
<feature type="modified residue" description="Phosphoserine" evidence="2">
    <location>
        <position position="247"/>
    </location>
</feature>
<feature type="modified residue" description="Phosphoserine" evidence="9 10">
    <location>
        <position position="436"/>
    </location>
</feature>
<feature type="modified residue" description="Phosphoserine" evidence="9 10">
    <location>
        <position position="440"/>
    </location>
</feature>
<feature type="modified residue" description="Phosphothreonine" evidence="2">
    <location>
        <position position="659"/>
    </location>
</feature>
<feature type="modified residue" description="Phosphoserine" evidence="2">
    <location>
        <position position="884"/>
    </location>
</feature>
<feature type="modified residue" description="Phosphoserine" evidence="2">
    <location>
        <position position="908"/>
    </location>
</feature>
<feature type="modified residue" description="Phosphoserine" evidence="2">
    <location>
        <position position="924"/>
    </location>
</feature>
<feature type="splice variant" id="VSP_013190" description="In isoform 2." evidence="7">
    <original>LATLQRDQREEEVEDT</original>
    <variation>VGISLPCRCGEGPVCV</variation>
    <location>
        <begin position="824"/>
        <end position="839"/>
    </location>
</feature>
<feature type="splice variant" id="VSP_013191" description="In isoform 2." evidence="7">
    <location>
        <begin position="840"/>
        <end position="971"/>
    </location>
</feature>
<sequence>MDSAETELTPAPEGRKRYSDIFQSLDNLEISLGNVTFDPLAGDPVRREDLEPDKADTATVVTEENSEASSWRDLSPEGPAPLTEEELDLRLIRTKGGVDAALEYAKAWSRYAKELLAWTDKRANYELEFAKSIMKLAEAGKVSILQQSQMPLQYIYTLFLEHDLSLGALALETVAQQKRDYYQPLAAKRMEIEKWRKEFKEQWLKEQKRMNEAVQALRRSELQYIQRREDLRARSQGSPEDPPSQASPGSNKQQERRRRSREEAQAKAHEAEALYQACVREANSRQQDLETTKRRIVSHVRKLVLQGDEVLRRVTLGLFELRGAQAERGPRSFSALAECCVPFEPGQRYQEFVRTLQPGAPPPPSPAFCFQEFTAVVHSFPQDTKKKFSGPLPPRLEEEGSPEPGPWEVASLGSQGIPGSDVDSVGGGSESRSLDSPTSSPGAGARRLVKASSTGTESSDDFEERDPDLGDGIENGVGSPFRKWTLSTAAQTHRLRRLRGPAKCRECEAFMVSGTECEECFLTCHKRCLETLLILCGHRRLPARMSLFGVDFLQLPRDFPEEVPFVITRCTAEIEHRALGLQGIYRVSGSRVRVERLCQAFENGRALVELSGNSPHDITSVLKRFLQELTDPVVPFHLYDAFISLAKTLHADPGDDPGTPNPSPEIIRSLKTLLVQLPDSNYSTLRHLVAHLFRVAARFEENKMSANNLGIVFGPTLLRPPDGPRATGASPVACLLDSGHQAQLVEFLIVHYEQIFGMDELPLASEPLTQDPGLAPACLESSPQHPASLLAQDTQPLTIALDSSPDPKHHSALEKCPEVTPPELATLQRDQREEEVEDTRDGAGDGSSHCPEDLALGAQSRGHFSRQPVKYSRGGVRPVTHQLSSLALVASKLCEETPVTVSAVHRGSLRVRGLGPAAACPEGSPLRRNPLPKHFEITQETARLLSKLNSDAVSRTTCCADPEPEESEEHL</sequence>
<protein>
    <recommendedName>
        <fullName>GEM-interacting protein</fullName>
        <shortName>GMIP</shortName>
    </recommendedName>
</protein>
<keyword id="KW-0025">Alternative splicing</keyword>
<keyword id="KW-0175">Coiled coil</keyword>
<keyword id="KW-0343">GTPase activation</keyword>
<keyword id="KW-0479">Metal-binding</keyword>
<keyword id="KW-0597">Phosphoprotein</keyword>
<keyword id="KW-1185">Reference proteome</keyword>
<keyword id="KW-0862">Zinc</keyword>
<keyword id="KW-0863">Zinc-finger</keyword>
<reference key="1">
    <citation type="journal article" date="2004" name="Genome Res.">
        <title>The status, quality, and expansion of the NIH full-length cDNA project: the Mammalian Gene Collection (MGC).</title>
        <authorList>
            <consortium name="The MGC Project Team"/>
        </authorList>
    </citation>
    <scope>NUCLEOTIDE SEQUENCE [LARGE SCALE MRNA] (ISOFORMS 1 AND 2)</scope>
    <source>
        <strain>C57BL/6J</strain>
        <tissue>Brain</tissue>
    </source>
</reference>
<reference key="2">
    <citation type="journal article" date="2004" name="Mol. Cell. Proteomics">
        <title>Phosphoproteomic analysis of the developing mouse brain.</title>
        <authorList>
            <person name="Ballif B.A."/>
            <person name="Villen J."/>
            <person name="Beausoleil S.A."/>
            <person name="Schwartz D."/>
            <person name="Gygi S.P."/>
        </authorList>
    </citation>
    <scope>PHOSPHORYLATION [LARGE SCALE ANALYSIS] AT SER-75</scope>
    <scope>IDENTIFICATION BY MASS SPECTROMETRY [LARGE SCALE ANALYSIS]</scope>
    <source>
        <tissue>Embryonic brain</tissue>
    </source>
</reference>
<reference key="3">
    <citation type="journal article" date="2009" name="Immunity">
        <title>The phagosomal proteome in interferon-gamma-activated macrophages.</title>
        <authorList>
            <person name="Trost M."/>
            <person name="English L."/>
            <person name="Lemieux S."/>
            <person name="Courcelles M."/>
            <person name="Desjardins M."/>
            <person name="Thibault P."/>
        </authorList>
    </citation>
    <scope>PHOSPHORYLATION [LARGE SCALE ANALYSIS] AT SER-75; SER-436 AND SER-440</scope>
    <scope>IDENTIFICATION BY MASS SPECTROMETRY [LARGE SCALE ANALYSIS]</scope>
</reference>
<reference key="4">
    <citation type="journal article" date="2010" name="Cell">
        <title>A tissue-specific atlas of mouse protein phosphorylation and expression.</title>
        <authorList>
            <person name="Huttlin E.L."/>
            <person name="Jedrychowski M.P."/>
            <person name="Elias J.E."/>
            <person name="Goswami T."/>
            <person name="Rad R."/>
            <person name="Beausoleil S.A."/>
            <person name="Villen J."/>
            <person name="Haas W."/>
            <person name="Sowa M.E."/>
            <person name="Gygi S.P."/>
        </authorList>
    </citation>
    <scope>PHOSPHORYLATION [LARGE SCALE ANALYSIS] AT SER-75; SER-436 AND SER-440</scope>
    <scope>IDENTIFICATION BY MASS SPECTROMETRY [LARGE SCALE ANALYSIS]</scope>
    <source>
        <tissue>Brain</tissue>
        <tissue>Brown adipose tissue</tissue>
        <tissue>Heart</tissue>
        <tissue>Kidney</tissue>
        <tissue>Lung</tissue>
        <tissue>Pancreas</tissue>
        <tissue>Spleen</tissue>
    </source>
</reference>
<reference key="5">
    <citation type="journal article" date="2014" name="Mol. Cell. Proteomics">
        <title>Immunoaffinity enrichment and mass spectrometry analysis of protein methylation.</title>
        <authorList>
            <person name="Guo A."/>
            <person name="Gu H."/>
            <person name="Zhou J."/>
            <person name="Mulhern D."/>
            <person name="Wang Y."/>
            <person name="Lee K.A."/>
            <person name="Yang V."/>
            <person name="Aguiar M."/>
            <person name="Kornhauser J."/>
            <person name="Jia X."/>
            <person name="Ren J."/>
            <person name="Beausoleil S.A."/>
            <person name="Silva J.C."/>
            <person name="Vemulapalli V."/>
            <person name="Bedford M.T."/>
            <person name="Comb M.J."/>
        </authorList>
    </citation>
    <scope>IDENTIFICATION BY MASS SPECTROMETRY [LARGE SCALE ANALYSIS]</scope>
    <source>
        <tissue>Embryo</tissue>
    </source>
</reference>
<name>GMIP_MOUSE</name>